<name>ATPG_CLOK5</name>
<organism>
    <name type="scientific">Clostridium kluyveri (strain ATCC 8527 / DSM 555 / NBRC 12016 / NCIMB 10680 / K1)</name>
    <dbReference type="NCBI Taxonomy" id="431943"/>
    <lineage>
        <taxon>Bacteria</taxon>
        <taxon>Bacillati</taxon>
        <taxon>Bacillota</taxon>
        <taxon>Clostridia</taxon>
        <taxon>Eubacteriales</taxon>
        <taxon>Clostridiaceae</taxon>
        <taxon>Clostridium</taxon>
    </lineage>
</organism>
<keyword id="KW-0066">ATP synthesis</keyword>
<keyword id="KW-1003">Cell membrane</keyword>
<keyword id="KW-0139">CF(1)</keyword>
<keyword id="KW-0375">Hydrogen ion transport</keyword>
<keyword id="KW-0406">Ion transport</keyword>
<keyword id="KW-0472">Membrane</keyword>
<keyword id="KW-1185">Reference proteome</keyword>
<keyword id="KW-0813">Transport</keyword>
<evidence type="ECO:0000255" key="1">
    <source>
        <dbReference type="HAMAP-Rule" id="MF_00815"/>
    </source>
</evidence>
<gene>
    <name evidence="1" type="primary">atpG</name>
    <name type="ordered locus">CKL_3689</name>
</gene>
<sequence>MAGAGLVTIKRRIKSITSTQKITKAMGLIATSKLRKVRKKLEANNKYCELFSSIVNELAMEAEQNNIYIKGNKSNKKLYIALNSDTGLCGGFNANVVNELNSIRSKEKEDFLLITMGQKGKMYFRRLNYNIESEYIDIPDVPTIKETEDVVYKALELYRNGEIGEINIVFTKFISTIKQNVIVEKLLPLEVKKVEKRNFIVKFEPSADEMIEDIVELHLRQKLLNCIINSKVSEQSSRMTAMDGATKNANDLLDELNLQYNRERQTAITQEITEIVGGAEALK</sequence>
<feature type="chain" id="PRO_1000083780" description="ATP synthase gamma chain">
    <location>
        <begin position="1"/>
        <end position="283"/>
    </location>
</feature>
<reference key="1">
    <citation type="journal article" date="2008" name="Proc. Natl. Acad. Sci. U.S.A.">
        <title>The genome of Clostridium kluyveri, a strict anaerobe with unique metabolic features.</title>
        <authorList>
            <person name="Seedorf H."/>
            <person name="Fricke W.F."/>
            <person name="Veith B."/>
            <person name="Brueggemann H."/>
            <person name="Liesegang H."/>
            <person name="Strittmatter A."/>
            <person name="Miethke M."/>
            <person name="Buckel W."/>
            <person name="Hinderberger J."/>
            <person name="Li F."/>
            <person name="Hagemeier C."/>
            <person name="Thauer R.K."/>
            <person name="Gottschalk G."/>
        </authorList>
    </citation>
    <scope>NUCLEOTIDE SEQUENCE [LARGE SCALE GENOMIC DNA]</scope>
    <source>
        <strain>ATCC 8527 / DSM 555 / NBRC 12016 / NCIMB 10680 / K1</strain>
    </source>
</reference>
<comment type="function">
    <text evidence="1">Produces ATP from ADP in the presence of a proton gradient across the membrane. The gamma chain is believed to be important in regulating ATPase activity and the flow of protons through the CF(0) complex.</text>
</comment>
<comment type="subunit">
    <text evidence="1">F-type ATPases have 2 components, CF(1) - the catalytic core - and CF(0) - the membrane proton channel. CF(1) has five subunits: alpha(3), beta(3), gamma(1), delta(1), epsilon(1). CF(0) has three main subunits: a, b and c.</text>
</comment>
<comment type="subcellular location">
    <subcellularLocation>
        <location evidence="1">Cell membrane</location>
        <topology evidence="1">Peripheral membrane protein</topology>
    </subcellularLocation>
</comment>
<comment type="similarity">
    <text evidence="1">Belongs to the ATPase gamma chain family.</text>
</comment>
<dbReference type="EMBL" id="CP000673">
    <property type="protein sequence ID" value="EDK35674.1"/>
    <property type="molecule type" value="Genomic_DNA"/>
</dbReference>
<dbReference type="RefSeq" id="WP_012104007.1">
    <property type="nucleotide sequence ID" value="NC_009706.1"/>
</dbReference>
<dbReference type="SMR" id="A5N3H8"/>
<dbReference type="STRING" id="431943.CKL_3689"/>
<dbReference type="KEGG" id="ckl:CKL_3689"/>
<dbReference type="eggNOG" id="COG0224">
    <property type="taxonomic scope" value="Bacteria"/>
</dbReference>
<dbReference type="HOGENOM" id="CLU_050669_0_1_9"/>
<dbReference type="Proteomes" id="UP000002411">
    <property type="component" value="Chromosome"/>
</dbReference>
<dbReference type="GO" id="GO:0005886">
    <property type="term" value="C:plasma membrane"/>
    <property type="evidence" value="ECO:0007669"/>
    <property type="project" value="UniProtKB-SubCell"/>
</dbReference>
<dbReference type="GO" id="GO:0045259">
    <property type="term" value="C:proton-transporting ATP synthase complex"/>
    <property type="evidence" value="ECO:0007669"/>
    <property type="project" value="UniProtKB-KW"/>
</dbReference>
<dbReference type="GO" id="GO:0005524">
    <property type="term" value="F:ATP binding"/>
    <property type="evidence" value="ECO:0007669"/>
    <property type="project" value="UniProtKB-UniRule"/>
</dbReference>
<dbReference type="GO" id="GO:0046933">
    <property type="term" value="F:proton-transporting ATP synthase activity, rotational mechanism"/>
    <property type="evidence" value="ECO:0007669"/>
    <property type="project" value="UniProtKB-UniRule"/>
</dbReference>
<dbReference type="GO" id="GO:0042777">
    <property type="term" value="P:proton motive force-driven plasma membrane ATP synthesis"/>
    <property type="evidence" value="ECO:0007669"/>
    <property type="project" value="UniProtKB-UniRule"/>
</dbReference>
<dbReference type="CDD" id="cd12151">
    <property type="entry name" value="F1-ATPase_gamma"/>
    <property type="match status" value="1"/>
</dbReference>
<dbReference type="Gene3D" id="3.40.1380.10">
    <property type="match status" value="1"/>
</dbReference>
<dbReference type="Gene3D" id="1.10.287.80">
    <property type="entry name" value="ATP synthase, gamma subunit, helix hairpin domain"/>
    <property type="match status" value="1"/>
</dbReference>
<dbReference type="HAMAP" id="MF_00815">
    <property type="entry name" value="ATP_synth_gamma_bact"/>
    <property type="match status" value="1"/>
</dbReference>
<dbReference type="InterPro" id="IPR035968">
    <property type="entry name" value="ATP_synth_F1_ATPase_gsu"/>
</dbReference>
<dbReference type="InterPro" id="IPR000131">
    <property type="entry name" value="ATP_synth_F1_gsu"/>
</dbReference>
<dbReference type="InterPro" id="IPR023632">
    <property type="entry name" value="ATP_synth_F1_gsu_CS"/>
</dbReference>
<dbReference type="NCBIfam" id="TIGR01146">
    <property type="entry name" value="ATPsyn_F1gamma"/>
    <property type="match status" value="1"/>
</dbReference>
<dbReference type="PANTHER" id="PTHR11693">
    <property type="entry name" value="ATP SYNTHASE GAMMA CHAIN"/>
    <property type="match status" value="1"/>
</dbReference>
<dbReference type="PANTHER" id="PTHR11693:SF22">
    <property type="entry name" value="ATP SYNTHASE SUBUNIT GAMMA, MITOCHONDRIAL"/>
    <property type="match status" value="1"/>
</dbReference>
<dbReference type="Pfam" id="PF00231">
    <property type="entry name" value="ATP-synt"/>
    <property type="match status" value="1"/>
</dbReference>
<dbReference type="PRINTS" id="PR00126">
    <property type="entry name" value="ATPASEGAMMA"/>
</dbReference>
<dbReference type="SUPFAM" id="SSF52943">
    <property type="entry name" value="ATP synthase (F1-ATPase), gamma subunit"/>
    <property type="match status" value="1"/>
</dbReference>
<dbReference type="PROSITE" id="PS00153">
    <property type="entry name" value="ATPASE_GAMMA"/>
    <property type="match status" value="1"/>
</dbReference>
<protein>
    <recommendedName>
        <fullName evidence="1">ATP synthase gamma chain</fullName>
    </recommendedName>
    <alternativeName>
        <fullName evidence="1">ATP synthase F1 sector gamma subunit</fullName>
    </alternativeName>
    <alternativeName>
        <fullName evidence="1">F-ATPase gamma subunit</fullName>
    </alternativeName>
</protein>
<accession>A5N3H8</accession>
<proteinExistence type="inferred from homology"/>